<feature type="signal peptide" evidence="2">
    <location>
        <begin position="1"/>
        <end position="21"/>
    </location>
</feature>
<feature type="chain" id="PRO_5035942916" description="Secreted mono- and diacylglycerol lipase LIP2">
    <location>
        <begin position="22"/>
        <end position="315"/>
    </location>
</feature>
<feature type="active site" description="Nucleophile" evidence="4">
    <location>
        <position position="182"/>
    </location>
</feature>
<feature type="active site" evidence="1">
    <location>
        <position position="240"/>
    </location>
</feature>
<feature type="active site" evidence="1">
    <location>
        <position position="292"/>
    </location>
</feature>
<feature type="glycosylation site" description="N-linked (GlcNAc...) asparagine" evidence="3">
    <location>
        <position position="74"/>
    </location>
</feature>
<feature type="glycosylation site" description="N-linked (GlcNAc...) asparagine" evidence="3">
    <location>
        <position position="265"/>
    </location>
</feature>
<feature type="disulfide bond" evidence="1">
    <location>
        <begin position="68"/>
        <end position="308"/>
    </location>
</feature>
<accession>A0A8R9Z3C6</accession>
<dbReference type="EC" id="3.1.1.-" evidence="5"/>
<dbReference type="EMBL" id="CP030257">
    <property type="protein sequence ID" value="AXA51875.1"/>
    <property type="molecule type" value="Genomic_DNA"/>
</dbReference>
<dbReference type="SMR" id="A0A8R9Z3C6"/>
<dbReference type="OrthoDB" id="426718at2759"/>
<dbReference type="GO" id="GO:0005576">
    <property type="term" value="C:extracellular region"/>
    <property type="evidence" value="ECO:0007669"/>
    <property type="project" value="UniProtKB-SubCell"/>
</dbReference>
<dbReference type="GO" id="GO:0016787">
    <property type="term" value="F:hydrolase activity"/>
    <property type="evidence" value="ECO:0007669"/>
    <property type="project" value="UniProtKB-KW"/>
</dbReference>
<dbReference type="GO" id="GO:0046872">
    <property type="term" value="F:metal ion binding"/>
    <property type="evidence" value="ECO:0007669"/>
    <property type="project" value="UniProtKB-KW"/>
</dbReference>
<dbReference type="GO" id="GO:0016042">
    <property type="term" value="P:lipid catabolic process"/>
    <property type="evidence" value="ECO:0007669"/>
    <property type="project" value="UniProtKB-KW"/>
</dbReference>
<dbReference type="CDD" id="cd00741">
    <property type="entry name" value="Lipase"/>
    <property type="match status" value="1"/>
</dbReference>
<dbReference type="Gene3D" id="3.40.50.1820">
    <property type="entry name" value="alpha/beta hydrolase"/>
    <property type="match status" value="1"/>
</dbReference>
<dbReference type="InterPro" id="IPR029058">
    <property type="entry name" value="AB_hydrolase_fold"/>
</dbReference>
<dbReference type="InterPro" id="IPR002921">
    <property type="entry name" value="Fungal_lipase-type"/>
</dbReference>
<dbReference type="InterPro" id="IPR051218">
    <property type="entry name" value="Sec_MonoDiacylglyc_Lipase"/>
</dbReference>
<dbReference type="PANTHER" id="PTHR45856">
    <property type="entry name" value="ALPHA/BETA-HYDROLASES SUPERFAMILY PROTEIN"/>
    <property type="match status" value="1"/>
</dbReference>
<dbReference type="PANTHER" id="PTHR45856:SF25">
    <property type="entry name" value="FUNGAL LIPASE-LIKE DOMAIN-CONTAINING PROTEIN"/>
    <property type="match status" value="1"/>
</dbReference>
<dbReference type="Pfam" id="PF01764">
    <property type="entry name" value="Lipase_3"/>
    <property type="match status" value="1"/>
</dbReference>
<dbReference type="SUPFAM" id="SSF53474">
    <property type="entry name" value="alpha/beta-Hydrolases"/>
    <property type="match status" value="1"/>
</dbReference>
<keyword id="KW-1015">Disulfide bond</keyword>
<keyword id="KW-0325">Glycoprotein</keyword>
<keyword id="KW-0378">Hydrolase</keyword>
<keyword id="KW-0442">Lipid degradation</keyword>
<keyword id="KW-0443">Lipid metabolism</keyword>
<keyword id="KW-0479">Metal-binding</keyword>
<keyword id="KW-0964">Secreted</keyword>
<keyword id="KW-0732">Signal</keyword>
<sequence length="315" mass="35401">MACFRVILYLSVIFFVQCVFAAPKGITKVAPENHNFFGRITSYAHPKDVPDPVPMYQQFAALAQQSNCHNYHINISVGDATLLYSWGDNDRNQRLQLFHSKSLGIVASWAGMNPTKINSILGAADVFLVDVDRRYFPHAEKGAKLYKGFQDAYKRVAPTFIKELQYYQELYNEDRVSLTGLSYGAALANIALLHVKKNLKRGSIYRTVAFGLPRVGNQEWANSIDKHADGKFFYVANGNDLVVRAPPRELGYQHPSGQIWINPSNSSKWKFYPGQENVHGANSEFGYSIPDHTGVYFRTEIASLWGHCPATVGKD</sequence>
<gene>
    <name evidence="6" type="primary">LIP2</name>
    <name type="ORF">MRET_4032</name>
</gene>
<protein>
    <recommendedName>
        <fullName evidence="6">Secreted mono- and diacylglycerol lipase LIP2</fullName>
        <ecNumber evidence="5">3.1.1.-</ecNumber>
    </recommendedName>
</protein>
<proteinExistence type="evidence at protein level"/>
<evidence type="ECO:0000250" key="1">
    <source>
        <dbReference type="UniProtKB" id="A8PUY1"/>
    </source>
</evidence>
<evidence type="ECO:0000255" key="2"/>
<evidence type="ECO:0000255" key="3">
    <source>
        <dbReference type="PROSITE-ProRule" id="PRU00498"/>
    </source>
</evidence>
<evidence type="ECO:0000255" key="4">
    <source>
        <dbReference type="PROSITE-ProRule" id="PRU10037"/>
    </source>
</evidence>
<evidence type="ECO:0000269" key="5">
    <source>
    </source>
</evidence>
<evidence type="ECO:0000303" key="6">
    <source>
    </source>
</evidence>
<evidence type="ECO:0000305" key="7"/>
<evidence type="ECO:0000305" key="8">
    <source>
    </source>
</evidence>
<name>LIP2_MALRS</name>
<organism>
    <name type="scientific">Malassezia restricta</name>
    <name type="common">Seborrheic dermatitis infection agent</name>
    <dbReference type="NCBI Taxonomy" id="76775"/>
    <lineage>
        <taxon>Eukaryota</taxon>
        <taxon>Fungi</taxon>
        <taxon>Dikarya</taxon>
        <taxon>Basidiomycota</taxon>
        <taxon>Ustilaginomycotina</taxon>
        <taxon>Malasseziomycetes</taxon>
        <taxon>Malasseziales</taxon>
        <taxon>Malasseziaceae</taxon>
        <taxon>Malassezia</taxon>
    </lineage>
</organism>
<reference key="1">
    <citation type="journal article" date="2017" name="Mycoses">
        <title>Whole genome sequencing analysis of the cutaneous pathogenic yeast Malassezia restricta and identification of the major lipase expressed on the scalp of patients with dandruff.</title>
        <authorList>
            <person name="Park M."/>
            <person name="Cho Y.J."/>
            <person name="Lee Y.W."/>
            <person name="Jung W.H."/>
        </authorList>
    </citation>
    <scope>NUCLEOTIDE SEQUENCE [LARGE SCALE GENOMIC DNA]</scope>
    <source>
        <strain>KCTC 27527</strain>
    </source>
</reference>
<reference key="2">
    <citation type="journal article" date="2015" name="FEMS Yeast Res.">
        <title>Identification and characterization of lipases from Malassezia restricta, a causative agent of dandruff.</title>
        <authorList>
            <person name="Sommer B."/>
            <person name="Overy D.P."/>
            <person name="Kerr R.G."/>
        </authorList>
    </citation>
    <scope>FUNCTION</scope>
    <scope>CATALYTIC ACTIVITY</scope>
</reference>
<comment type="function">
    <text evidence="5 8">Secreted lipase involved in Dandruff and seborrheic dermatitis (D/SD) probably via lipase-mediated breakdown of sebaceous lipids and release of irritating free fatty acids (PubMed:26298017). Shows activity against monoglyceride and diglyceride substrates and generates free oleic acid from the substrates mono- and diolein (PubMed:26298017). Able to cleave the oleic acid from both the 1 and the 2 position of the glycerol backbone as 1,2 isomers of diolein were converted into oleic acid and glycerol (PubMed:26298017). Due to an absence of fatty acid synthase genes in Malassezia species, secretory lipases are essential for the yeast to generate free fatty acids from degradation of sebum and assimilate them as lipid sources for growth (Probable). Plays an essential role at the pathogen-host interface during disease progression (Probable). Also performs the reverse reaction to build diacylglycerols from monoacylglycerols (PubMed:26298017).</text>
</comment>
<comment type="catalytic activity">
    <reaction evidence="5">
        <text>a monoacylglycerol + H2O = glycerol + a fatty acid + H(+)</text>
        <dbReference type="Rhea" id="RHEA:15245"/>
        <dbReference type="ChEBI" id="CHEBI:15377"/>
        <dbReference type="ChEBI" id="CHEBI:15378"/>
        <dbReference type="ChEBI" id="CHEBI:17408"/>
        <dbReference type="ChEBI" id="CHEBI:17754"/>
        <dbReference type="ChEBI" id="CHEBI:28868"/>
    </reaction>
</comment>
<comment type="catalytic activity">
    <reaction evidence="5">
        <text>a diacylglycerol + H2O = a monoacylglycerol + a fatty acid + H(+)</text>
        <dbReference type="Rhea" id="RHEA:32731"/>
        <dbReference type="ChEBI" id="CHEBI:15377"/>
        <dbReference type="ChEBI" id="CHEBI:15378"/>
        <dbReference type="ChEBI" id="CHEBI:17408"/>
        <dbReference type="ChEBI" id="CHEBI:18035"/>
        <dbReference type="ChEBI" id="CHEBI:28868"/>
    </reaction>
</comment>
<comment type="subcellular location">
    <subcellularLocation>
        <location evidence="8">Secreted</location>
    </subcellularLocation>
</comment>
<comment type="similarity">
    <text evidence="7">Belongs to the AB hydrolase superfamily. Lipase family. Class 3 subfamily.</text>
</comment>